<protein>
    <recommendedName>
        <fullName>Probable fimbrial subunit LpfE</fullName>
    </recommendedName>
</protein>
<dbReference type="EMBL" id="AE005174">
    <property type="protein sequence ID" value="AAG58690.1"/>
    <property type="molecule type" value="Genomic_DNA"/>
</dbReference>
<dbReference type="EMBL" id="BA000007">
    <property type="protein sequence ID" value="BAB37849.1"/>
    <property type="molecule type" value="Genomic_DNA"/>
</dbReference>
<dbReference type="PIR" id="B91182">
    <property type="entry name" value="B91182"/>
</dbReference>
<dbReference type="PIR" id="F86028">
    <property type="entry name" value="F86028"/>
</dbReference>
<dbReference type="RefSeq" id="NP_312453.1">
    <property type="nucleotide sequence ID" value="NC_002695.1"/>
</dbReference>
<dbReference type="RefSeq" id="WP_000669675.1">
    <property type="nucleotide sequence ID" value="NZ_VOAI01000004.1"/>
</dbReference>
<dbReference type="SMR" id="Q8X5L0"/>
<dbReference type="STRING" id="155864.Z4965"/>
<dbReference type="GeneID" id="915704"/>
<dbReference type="KEGG" id="ece:Z4965"/>
<dbReference type="KEGG" id="ecs:ECs_4426"/>
<dbReference type="PATRIC" id="fig|386585.9.peg.4632"/>
<dbReference type="eggNOG" id="COG3539">
    <property type="taxonomic scope" value="Bacteria"/>
</dbReference>
<dbReference type="HOGENOM" id="CLU_088965_0_3_6"/>
<dbReference type="OMA" id="MWRNSIR"/>
<dbReference type="Proteomes" id="UP000000558">
    <property type="component" value="Chromosome"/>
</dbReference>
<dbReference type="Proteomes" id="UP000002519">
    <property type="component" value="Chromosome"/>
</dbReference>
<dbReference type="GO" id="GO:0009289">
    <property type="term" value="C:pilus"/>
    <property type="evidence" value="ECO:0007669"/>
    <property type="project" value="UniProtKB-SubCell"/>
</dbReference>
<dbReference type="GO" id="GO:0043709">
    <property type="term" value="P:cell adhesion involved in single-species biofilm formation"/>
    <property type="evidence" value="ECO:0007669"/>
    <property type="project" value="TreeGrafter"/>
</dbReference>
<dbReference type="Gene3D" id="2.60.40.1090">
    <property type="entry name" value="Fimbrial-type adhesion domain"/>
    <property type="match status" value="1"/>
</dbReference>
<dbReference type="InterPro" id="IPR000259">
    <property type="entry name" value="Adhesion_dom_fimbrial"/>
</dbReference>
<dbReference type="InterPro" id="IPR036937">
    <property type="entry name" value="Adhesion_dom_fimbrial_sf"/>
</dbReference>
<dbReference type="InterPro" id="IPR008966">
    <property type="entry name" value="Adhesion_dom_sf"/>
</dbReference>
<dbReference type="InterPro" id="IPR050263">
    <property type="entry name" value="Bact_Fimbrial_Adh_Pro"/>
</dbReference>
<dbReference type="NCBIfam" id="NF011752">
    <property type="entry name" value="PRK15205.1"/>
    <property type="match status" value="1"/>
</dbReference>
<dbReference type="PANTHER" id="PTHR33420">
    <property type="entry name" value="FIMBRIAL SUBUNIT ELFA-RELATED"/>
    <property type="match status" value="1"/>
</dbReference>
<dbReference type="PANTHER" id="PTHR33420:SF12">
    <property type="entry name" value="FIMBRIN-LIKE PROTEIN FIMI-RELATED"/>
    <property type="match status" value="1"/>
</dbReference>
<dbReference type="Pfam" id="PF00419">
    <property type="entry name" value="Fimbrial"/>
    <property type="match status" value="1"/>
</dbReference>
<dbReference type="SUPFAM" id="SSF49401">
    <property type="entry name" value="Bacterial adhesins"/>
    <property type="match status" value="1"/>
</dbReference>
<sequence length="176" mass="18475">MKFKRLLHSGIASLSLVACGVNAATDLGPAGDIHFSITITTKACEMEKSDLEVDMGTMTLQKPAAVGTVLSKKDFTIELKECDGISKATVEMDSQSDSDDDSMFALEAGGATGVALKIEDDKGTQQVPKGSSGTPIEWAIDGETTSLHYQASYVVVNTQATGGTANALVNFSITYE</sequence>
<evidence type="ECO:0000250" key="1"/>
<evidence type="ECO:0000255" key="2"/>
<evidence type="ECO:0000269" key="3">
    <source>
    </source>
</evidence>
<evidence type="ECO:0000305" key="4"/>
<proteinExistence type="evidence at transcript level"/>
<name>LPFE_ECO57</name>
<gene>
    <name type="primary">lpfE</name>
    <name type="ordered locus">Z4965</name>
    <name type="ordered locus">ECs4426</name>
</gene>
<keyword id="KW-0281">Fimbrium</keyword>
<keyword id="KW-1185">Reference proteome</keyword>
<keyword id="KW-0732">Signal</keyword>
<accession>Q8X5L0</accession>
<accession>Q7A9Z0</accession>
<comment type="function">
    <text evidence="3">Part of the lpfABCC'DE fimbrial operon. LP fimbriae may participate in the interaction with eukaryotic cells by assisting in microcolony formation.</text>
</comment>
<comment type="subcellular location">
    <subcellularLocation>
        <location evidence="1">Fimbrium</location>
    </subcellularLocation>
</comment>
<comment type="induction">
    <text evidence="3">Induced during the exponential growth phase.</text>
</comment>
<comment type="similarity">
    <text evidence="4">Belongs to the fimbrial protein family.</text>
</comment>
<organism>
    <name type="scientific">Escherichia coli O157:H7</name>
    <dbReference type="NCBI Taxonomy" id="83334"/>
    <lineage>
        <taxon>Bacteria</taxon>
        <taxon>Pseudomonadati</taxon>
        <taxon>Pseudomonadota</taxon>
        <taxon>Gammaproteobacteria</taxon>
        <taxon>Enterobacterales</taxon>
        <taxon>Enterobacteriaceae</taxon>
        <taxon>Escherichia</taxon>
    </lineage>
</organism>
<feature type="signal peptide" evidence="2">
    <location>
        <begin position="1"/>
        <end position="23"/>
    </location>
</feature>
<feature type="chain" id="PRO_0000429483" description="Probable fimbrial subunit LpfE">
    <location>
        <begin position="24"/>
        <end position="176"/>
    </location>
</feature>
<reference key="1">
    <citation type="journal article" date="2001" name="DNA Res.">
        <title>Complete genome sequence of enterohemorrhagic Escherichia coli O157:H7 and genomic comparison with a laboratory strain K-12.</title>
        <authorList>
            <person name="Hayashi T."/>
            <person name="Makino K."/>
            <person name="Ohnishi M."/>
            <person name="Kurokawa K."/>
            <person name="Ishii K."/>
            <person name="Yokoyama K."/>
            <person name="Han C.-G."/>
            <person name="Ohtsubo E."/>
            <person name="Nakayama K."/>
            <person name="Murata T."/>
            <person name="Tanaka M."/>
            <person name="Tobe T."/>
            <person name="Iida T."/>
            <person name="Takami H."/>
            <person name="Honda T."/>
            <person name="Sasakawa C."/>
            <person name="Ogasawara N."/>
            <person name="Yasunaga T."/>
            <person name="Kuhara S."/>
            <person name="Shiba T."/>
            <person name="Hattori M."/>
            <person name="Shinagawa H."/>
        </authorList>
    </citation>
    <scope>NUCLEOTIDE SEQUENCE [LARGE SCALE GENOMIC DNA]</scope>
    <source>
        <strain>O157:H7 / Sakai / RIMD 0509952 / EHEC</strain>
    </source>
</reference>
<reference key="2">
    <citation type="journal article" date="2001" name="Nature">
        <title>Genome sequence of enterohaemorrhagic Escherichia coli O157:H7.</title>
        <authorList>
            <person name="Perna N.T."/>
            <person name="Plunkett G. III"/>
            <person name="Burland V."/>
            <person name="Mau B."/>
            <person name="Glasner J.D."/>
            <person name="Rose D.J."/>
            <person name="Mayhew G.F."/>
            <person name="Evans P.S."/>
            <person name="Gregor J."/>
            <person name="Kirkpatrick H.A."/>
            <person name="Posfai G."/>
            <person name="Hackett J."/>
            <person name="Klink S."/>
            <person name="Boutin A."/>
            <person name="Shao Y."/>
            <person name="Miller L."/>
            <person name="Grotbeck E.J."/>
            <person name="Davis N.W."/>
            <person name="Lim A."/>
            <person name="Dimalanta E.T."/>
            <person name="Potamousis K."/>
            <person name="Apodaca J."/>
            <person name="Anantharaman T.S."/>
            <person name="Lin J."/>
            <person name="Yen G."/>
            <person name="Schwartz D.C."/>
            <person name="Welch R.A."/>
            <person name="Blattner F.R."/>
        </authorList>
    </citation>
    <scope>NUCLEOTIDE SEQUENCE [LARGE SCALE GENOMIC DNA]</scope>
    <source>
        <strain>O157:H7 / EDL933 / ATCC 700927 / EHEC</strain>
    </source>
</reference>
<reference key="3">
    <citation type="journal article" date="2002" name="Infect. Immun.">
        <title>Identification and characterization of lpfABCC'DE, a fimbrial operon of enterohemorrhagic Escherichia coli O157:H7.</title>
        <authorList>
            <person name="Torres A.G."/>
            <person name="Giron J.A."/>
            <person name="Perna N.T."/>
            <person name="Burland V."/>
            <person name="Blattner F.R."/>
            <person name="Avelino-Flores F."/>
            <person name="Kaper J.B."/>
        </authorList>
    </citation>
    <scope>FUNCTION</scope>
    <scope>INDUCTION</scope>
    <scope>GENE NAME</scope>
    <source>
        <strain>O157:H7 / EDL933 / ATCC 700927 / EHEC</strain>
    </source>
</reference>